<protein>
    <recommendedName>
        <fullName>Serotransferrin</fullName>
        <shortName>Transferrin</shortName>
    </recommendedName>
    <alternativeName>
        <fullName>Beta-1 metal-binding globulin</fullName>
    </alternativeName>
    <alternativeName>
        <fullName>Siderophilin</fullName>
    </alternativeName>
</protein>
<proteinExistence type="evidence at transcript level"/>
<feature type="signal peptide" evidence="1">
    <location>
        <begin position="1"/>
        <end position="19"/>
    </location>
</feature>
<feature type="chain" id="PRO_0000035713" description="Serotransferrin">
    <location>
        <begin position="20"/>
        <end position="704"/>
    </location>
</feature>
<feature type="domain" description="Transferrin-like 1" evidence="5">
    <location>
        <begin position="25"/>
        <end position="351"/>
    </location>
</feature>
<feature type="domain" description="Transferrin-like 2" evidence="5">
    <location>
        <begin position="364"/>
        <end position="689"/>
    </location>
</feature>
<feature type="binding site" evidence="5">
    <location>
        <position position="81"/>
    </location>
    <ligand>
        <name>Fe(3+)</name>
        <dbReference type="ChEBI" id="CHEBI:29034"/>
        <label>1</label>
    </ligand>
</feature>
<feature type="binding site" evidence="5">
    <location>
        <position position="113"/>
    </location>
    <ligand>
        <name>Fe(3+)</name>
        <dbReference type="ChEBI" id="CHEBI:29034"/>
        <label>1</label>
    </ligand>
</feature>
<feature type="binding site" evidence="5">
    <location>
        <position position="138"/>
    </location>
    <ligand>
        <name>hydrogencarbonate</name>
        <dbReference type="ChEBI" id="CHEBI:17544"/>
        <label>1</label>
    </ligand>
</feature>
<feature type="binding site" evidence="5">
    <location>
        <position position="142"/>
    </location>
    <ligand>
        <name>hydrogencarbonate</name>
        <dbReference type="ChEBI" id="CHEBI:17544"/>
        <label>1</label>
    </ligand>
</feature>
<feature type="binding site" evidence="5">
    <location>
        <position position="144"/>
    </location>
    <ligand>
        <name>hydrogencarbonate</name>
        <dbReference type="ChEBI" id="CHEBI:17544"/>
        <label>1</label>
    </ligand>
</feature>
<feature type="binding site" evidence="5">
    <location>
        <position position="145"/>
    </location>
    <ligand>
        <name>hydrogencarbonate</name>
        <dbReference type="ChEBI" id="CHEBI:17544"/>
        <label>1</label>
    </ligand>
</feature>
<feature type="binding site" evidence="5">
    <location>
        <position position="211"/>
    </location>
    <ligand>
        <name>Fe(3+)</name>
        <dbReference type="ChEBI" id="CHEBI:29034"/>
        <label>1</label>
    </ligand>
</feature>
<feature type="binding site" evidence="5">
    <location>
        <position position="272"/>
    </location>
    <ligand>
        <name>Fe(3+)</name>
        <dbReference type="ChEBI" id="CHEBI:29034"/>
        <label>1</label>
    </ligand>
</feature>
<feature type="binding site" evidence="5">
    <location>
        <position position="414"/>
    </location>
    <ligand>
        <name>Fe(3+)</name>
        <dbReference type="ChEBI" id="CHEBI:29034"/>
        <label>2</label>
    </ligand>
</feature>
<feature type="binding site" evidence="5">
    <location>
        <position position="449"/>
    </location>
    <ligand>
        <name>Fe(3+)</name>
        <dbReference type="ChEBI" id="CHEBI:29034"/>
        <label>2</label>
    </ligand>
</feature>
<feature type="binding site" evidence="5">
    <location>
        <position position="475"/>
    </location>
    <ligand>
        <name>hydrogencarbonate</name>
        <dbReference type="ChEBI" id="CHEBI:17544"/>
        <label>2</label>
    </ligand>
</feature>
<feature type="binding site" evidence="5">
    <location>
        <position position="479"/>
    </location>
    <ligand>
        <name>hydrogencarbonate</name>
        <dbReference type="ChEBI" id="CHEBI:17544"/>
        <label>2</label>
    </ligand>
</feature>
<feature type="binding site" evidence="5">
    <location>
        <position position="481"/>
    </location>
    <ligand>
        <name>hydrogencarbonate</name>
        <dbReference type="ChEBI" id="CHEBI:17544"/>
        <label>2</label>
    </ligand>
</feature>
<feature type="binding site" evidence="5">
    <location>
        <position position="482"/>
    </location>
    <ligand>
        <name>hydrogencarbonate</name>
        <dbReference type="ChEBI" id="CHEBI:17544"/>
        <label>2</label>
    </ligand>
</feature>
<feature type="binding site" evidence="5">
    <location>
        <position position="543"/>
    </location>
    <ligand>
        <name>Fe(3+)</name>
        <dbReference type="ChEBI" id="CHEBI:29034"/>
        <label>2</label>
    </ligand>
</feature>
<feature type="binding site" evidence="5">
    <location>
        <position position="611"/>
    </location>
    <ligand>
        <name>Fe(3+)</name>
        <dbReference type="ChEBI" id="CHEBI:29034"/>
        <label>2</label>
    </ligand>
</feature>
<feature type="modified residue" description="Dimethylated arginine" evidence="3">
    <location>
        <position position="42"/>
    </location>
</feature>
<feature type="modified residue" description="Phosphoserine" evidence="2">
    <location>
        <position position="691"/>
    </location>
</feature>
<feature type="glycosylation site" description="N-linked (GlcNAc...) asparagine" evidence="4">
    <location>
        <position position="514"/>
    </location>
</feature>
<feature type="disulfide bond" evidence="5">
    <location>
        <begin position="28"/>
        <end position="66"/>
    </location>
</feature>
<feature type="disulfide bond" evidence="5">
    <location>
        <begin position="38"/>
        <end position="57"/>
    </location>
</feature>
<feature type="disulfide bond" evidence="5">
    <location>
        <begin position="136"/>
        <end position="217"/>
    </location>
</feature>
<feature type="disulfide bond" evidence="5">
    <location>
        <begin position="176"/>
        <end position="192"/>
    </location>
</feature>
<feature type="disulfide bond" evidence="5">
    <location>
        <begin position="179"/>
        <end position="200"/>
    </location>
</feature>
<feature type="disulfide bond" evidence="5">
    <location>
        <begin position="189"/>
        <end position="202"/>
    </location>
</feature>
<feature type="disulfide bond" evidence="5">
    <location>
        <begin position="250"/>
        <end position="264"/>
    </location>
</feature>
<feature type="disulfide bond" evidence="5">
    <location>
        <begin position="362"/>
        <end position="622"/>
    </location>
</feature>
<feature type="disulfide bond" evidence="5">
    <location>
        <begin position="367"/>
        <end position="399"/>
    </location>
</feature>
<feature type="disulfide bond" evidence="5">
    <location>
        <begin position="377"/>
        <end position="390"/>
    </location>
</feature>
<feature type="disulfide bond" evidence="5">
    <location>
        <begin position="424"/>
        <end position="699"/>
    </location>
</feature>
<feature type="disulfide bond" evidence="5">
    <location>
        <begin position="441"/>
        <end position="663"/>
    </location>
</feature>
<feature type="disulfide bond" evidence="5">
    <location>
        <begin position="473"/>
        <end position="549"/>
    </location>
</feature>
<feature type="disulfide bond" evidence="5">
    <location>
        <begin position="497"/>
        <end position="690"/>
    </location>
</feature>
<feature type="disulfide bond" evidence="5">
    <location>
        <begin position="507"/>
        <end position="521"/>
    </location>
</feature>
<feature type="disulfide bond" evidence="5">
    <location>
        <begin position="518"/>
        <end position="532"/>
    </location>
</feature>
<feature type="disulfide bond" evidence="5">
    <location>
        <begin position="589"/>
        <end position="603"/>
    </location>
</feature>
<feature type="disulfide bond" evidence="5">
    <location>
        <begin position="641"/>
        <end position="646"/>
    </location>
</feature>
<feature type="sequence conflict" description="In Ref. 2; AAI22603." evidence="6" ref="2">
    <original>A</original>
    <variation>G</variation>
    <location>
        <position position="151"/>
    </location>
</feature>
<gene>
    <name type="primary">TF</name>
</gene>
<organism>
    <name type="scientific">Bos taurus</name>
    <name type="common">Bovine</name>
    <dbReference type="NCBI Taxonomy" id="9913"/>
    <lineage>
        <taxon>Eukaryota</taxon>
        <taxon>Metazoa</taxon>
        <taxon>Chordata</taxon>
        <taxon>Craniata</taxon>
        <taxon>Vertebrata</taxon>
        <taxon>Euteleostomi</taxon>
        <taxon>Mammalia</taxon>
        <taxon>Eutheria</taxon>
        <taxon>Laurasiatheria</taxon>
        <taxon>Artiodactyla</taxon>
        <taxon>Ruminantia</taxon>
        <taxon>Pecora</taxon>
        <taxon>Bovidae</taxon>
        <taxon>Bovinae</taxon>
        <taxon>Bos</taxon>
    </lineage>
</organism>
<sequence>MRPAVRALLACAVLGLCLADPERTVRWCTISTHEANKCASFRENVLRILESGPFVSCVKKTSHMDCIKAISNNEADAVTLDGGLVYEAGLKPNNLKPVVAEFHGTKDNPQTHYYAVAVVKKDTDFKLNELRGKKSCHTGLGRSAGWNIPMAKLYKELPDPQESIQRAAANFFSASCVPCADQSSFPKLCQLCAGKGTDKCACSNHEPYFGYSGAFKCLMEGAGDVAFVKHSTVFDNLPNPEDRKNYELLCGDNTRKSVDDYQECYLAMVPSHAVVARTVGGKEDVIWELLNHAQEHFGKDKPDNFQLFQSPHGKDLLFKDSADGFLKIPSKMDFELYLGYEYVTALQNLRESKPPDSSKDECMVKWCAIGHQERTKCDRWSGFSGGAIECETAENTEECIAKIMKGEADAMSLDGGYLYIAGKCGLVPVLAENYKTEGESCKNTPEKGYLAVAVVKTSDANINWNNLKDKKSCHTAVDRTAGWNIPMGLLYSKINNCKFDEFFSAGCAPGSPRNSSLCALCIGSEKGTGKECVPNSNERYYGYTGAFRCLVEKGDVAFVKDQTVIQNTDGNNNEAWAKNLKKENFEVLCKDGTRKPVTDAENCHLARGPNHAVVSRKDKATCVEKILNKQQDDFGKSVTDCTSNFCLFQSNSKDLLFRDDTKCLASIAKKTYDSYLGDDYVRAMTNLRQCSTSKLLEACTFHKP</sequence>
<accession>Q29443</accession>
<accession>Q0IIK2</accession>
<dbReference type="EMBL" id="U02564">
    <property type="protein sequence ID" value="AAA96735.1"/>
    <property type="molecule type" value="mRNA"/>
</dbReference>
<dbReference type="EMBL" id="BC122602">
    <property type="protein sequence ID" value="AAI22603.1"/>
    <property type="molecule type" value="mRNA"/>
</dbReference>
<dbReference type="PIR" id="A60166">
    <property type="entry name" value="A60166"/>
</dbReference>
<dbReference type="RefSeq" id="NP_803450.2">
    <property type="nucleotide sequence ID" value="NM_177484.3"/>
</dbReference>
<dbReference type="SMR" id="Q29443"/>
<dbReference type="FunCoup" id="Q29443">
    <property type="interactions" value="850"/>
</dbReference>
<dbReference type="IntAct" id="Q29443">
    <property type="interactions" value="1"/>
</dbReference>
<dbReference type="STRING" id="9913.ENSBTAP00000009564"/>
<dbReference type="MEROPS" id="S60.970"/>
<dbReference type="GlyCosmos" id="Q29443">
    <property type="glycosylation" value="1 site, No reported glycans"/>
</dbReference>
<dbReference type="GlyGen" id="Q29443">
    <property type="glycosylation" value="1 site"/>
</dbReference>
<dbReference type="PaxDb" id="9913-ENSBTAP00000009564"/>
<dbReference type="PeptideAtlas" id="Q29443"/>
<dbReference type="GeneID" id="280705"/>
<dbReference type="KEGG" id="bta:280705"/>
<dbReference type="CTD" id="7018"/>
<dbReference type="eggNOG" id="ENOG502QT0C">
    <property type="taxonomic scope" value="Eukaryota"/>
</dbReference>
<dbReference type="InParanoid" id="Q29443"/>
<dbReference type="OrthoDB" id="41266at2759"/>
<dbReference type="Proteomes" id="UP000009136">
    <property type="component" value="Unplaced"/>
</dbReference>
<dbReference type="GO" id="GO:0005769">
    <property type="term" value="C:early endosome"/>
    <property type="evidence" value="ECO:0000318"/>
    <property type="project" value="GO_Central"/>
</dbReference>
<dbReference type="GO" id="GO:0005615">
    <property type="term" value="C:extracellular space"/>
    <property type="evidence" value="ECO:0000318"/>
    <property type="project" value="GO_Central"/>
</dbReference>
<dbReference type="GO" id="GO:0005886">
    <property type="term" value="C:plasma membrane"/>
    <property type="evidence" value="ECO:0000318"/>
    <property type="project" value="GO_Central"/>
</dbReference>
<dbReference type="GO" id="GO:0055037">
    <property type="term" value="C:recycling endosome"/>
    <property type="evidence" value="ECO:0000318"/>
    <property type="project" value="GO_Central"/>
</dbReference>
<dbReference type="GO" id="GO:0008199">
    <property type="term" value="F:ferric iron binding"/>
    <property type="evidence" value="ECO:0007669"/>
    <property type="project" value="InterPro"/>
</dbReference>
<dbReference type="GO" id="GO:0019731">
    <property type="term" value="P:antibacterial humoral response"/>
    <property type="evidence" value="ECO:0000318"/>
    <property type="project" value="GO_Central"/>
</dbReference>
<dbReference type="GO" id="GO:0006879">
    <property type="term" value="P:intracellular iron ion homeostasis"/>
    <property type="evidence" value="ECO:0007669"/>
    <property type="project" value="InterPro"/>
</dbReference>
<dbReference type="GO" id="GO:0006826">
    <property type="term" value="P:iron ion transport"/>
    <property type="evidence" value="ECO:0000318"/>
    <property type="project" value="GO_Central"/>
</dbReference>
<dbReference type="CDD" id="cd13617">
    <property type="entry name" value="PBP2_transferrin_C"/>
    <property type="match status" value="1"/>
</dbReference>
<dbReference type="CDD" id="cd13618">
    <property type="entry name" value="PBP2_transferrin_N"/>
    <property type="match status" value="1"/>
</dbReference>
<dbReference type="FunFam" id="3.40.190.10:FF:000095">
    <property type="entry name" value="Lactotransferrin"/>
    <property type="match status" value="1"/>
</dbReference>
<dbReference type="FunFam" id="3.40.190.10:FF:000105">
    <property type="entry name" value="Serotransferrin"/>
    <property type="match status" value="1"/>
</dbReference>
<dbReference type="Gene3D" id="3.40.190.10">
    <property type="entry name" value="Periplasmic binding protein-like II"/>
    <property type="match status" value="4"/>
</dbReference>
<dbReference type="InterPro" id="IPR030685">
    <property type="entry name" value="Serotransferrin_mammal"/>
</dbReference>
<dbReference type="InterPro" id="IPR016357">
    <property type="entry name" value="Transferrin"/>
</dbReference>
<dbReference type="InterPro" id="IPR001156">
    <property type="entry name" value="Transferrin-like_dom"/>
</dbReference>
<dbReference type="InterPro" id="IPR018195">
    <property type="entry name" value="Transferrin_Fe_BS"/>
</dbReference>
<dbReference type="PANTHER" id="PTHR11485:SF31">
    <property type="entry name" value="SEROTRANSFERRIN"/>
    <property type="match status" value="1"/>
</dbReference>
<dbReference type="PANTHER" id="PTHR11485">
    <property type="entry name" value="TRANSFERRIN"/>
    <property type="match status" value="1"/>
</dbReference>
<dbReference type="Pfam" id="PF00405">
    <property type="entry name" value="Transferrin"/>
    <property type="match status" value="2"/>
</dbReference>
<dbReference type="PIRSF" id="PIRSF500682">
    <property type="entry name" value="Serotransferrin"/>
    <property type="match status" value="1"/>
</dbReference>
<dbReference type="PIRSF" id="PIRSF002549">
    <property type="entry name" value="Transferrin"/>
    <property type="match status" value="1"/>
</dbReference>
<dbReference type="PRINTS" id="PR00422">
    <property type="entry name" value="TRANSFERRIN"/>
</dbReference>
<dbReference type="SMART" id="SM00094">
    <property type="entry name" value="TR_FER"/>
    <property type="match status" value="2"/>
</dbReference>
<dbReference type="SUPFAM" id="SSF53850">
    <property type="entry name" value="Periplasmic binding protein-like II"/>
    <property type="match status" value="2"/>
</dbReference>
<dbReference type="PROSITE" id="PS00205">
    <property type="entry name" value="TRANSFERRIN_LIKE_1"/>
    <property type="match status" value="1"/>
</dbReference>
<dbReference type="PROSITE" id="PS00206">
    <property type="entry name" value="TRANSFERRIN_LIKE_2"/>
    <property type="match status" value="2"/>
</dbReference>
<dbReference type="PROSITE" id="PS00207">
    <property type="entry name" value="TRANSFERRIN_LIKE_3"/>
    <property type="match status" value="1"/>
</dbReference>
<dbReference type="PROSITE" id="PS51408">
    <property type="entry name" value="TRANSFERRIN_LIKE_4"/>
    <property type="match status" value="2"/>
</dbReference>
<reference key="1">
    <citation type="journal article" date="1996" name="J. Biol. Chem.">
        <title>Production and characterization of chimeric transferrins for the determination of the binding domains for bacterial transferrin receptors.</title>
        <authorList>
            <person name="Retzer M.D."/>
            <person name="Kabani A."/>
            <person name="Button L.L."/>
            <person name="Yu R.H."/>
            <person name="Schryvers A.B."/>
        </authorList>
    </citation>
    <scope>NUCLEOTIDE SEQUENCE [MRNA]</scope>
    <source>
        <tissue>Liver</tissue>
    </source>
</reference>
<reference key="2">
    <citation type="submission" date="2006-08" db="EMBL/GenBank/DDBJ databases">
        <authorList>
            <consortium name="NIH - Mammalian Gene Collection (MGC) project"/>
        </authorList>
    </citation>
    <scope>NUCLEOTIDE SEQUENCE [LARGE SCALE MRNA]</scope>
    <source>
        <strain>Hereford</strain>
        <tissue>Hippocampus</tissue>
    </source>
</reference>
<comment type="function">
    <text>Transferrins are iron binding transport proteins which can bind two Fe(3+) ions in association with the binding of an anion, usually bicarbonate. It is responsible for the transport of iron from sites of absorption and heme degradation to those of storage and utilization. Serum transferrin may also have a further role in stimulating cell proliferation.</text>
</comment>
<comment type="subunit">
    <text evidence="2">Monomer. Part of a complex composed of SLC40A1/ferroportin, TF/transferrin and HEPH/hephaestin that transfers iron from cells to transferrin.</text>
</comment>
<comment type="subcellular location">
    <subcellularLocation>
        <location>Secreted</location>
    </subcellularLocation>
</comment>
<comment type="tissue specificity">
    <text>Expressed by the liver and secreted in plasma.</text>
</comment>
<comment type="similarity">
    <text evidence="5">Belongs to the transferrin family.</text>
</comment>
<name>TRFE_BOVIN</name>
<keyword id="KW-1015">Disulfide bond</keyword>
<keyword id="KW-0325">Glycoprotein</keyword>
<keyword id="KW-0406">Ion transport</keyword>
<keyword id="KW-0408">Iron</keyword>
<keyword id="KW-0410">Iron transport</keyword>
<keyword id="KW-0479">Metal-binding</keyword>
<keyword id="KW-0488">Methylation</keyword>
<keyword id="KW-0597">Phosphoprotein</keyword>
<keyword id="KW-1185">Reference proteome</keyword>
<keyword id="KW-0677">Repeat</keyword>
<keyword id="KW-0964">Secreted</keyword>
<keyword id="KW-0732">Signal</keyword>
<keyword id="KW-0813">Transport</keyword>
<evidence type="ECO:0000250" key="1"/>
<evidence type="ECO:0000250" key="2">
    <source>
        <dbReference type="UniProtKB" id="P02787"/>
    </source>
</evidence>
<evidence type="ECO:0000250" key="3">
    <source>
        <dbReference type="UniProtKB" id="P12346"/>
    </source>
</evidence>
<evidence type="ECO:0000255" key="4"/>
<evidence type="ECO:0000255" key="5">
    <source>
        <dbReference type="PROSITE-ProRule" id="PRU00741"/>
    </source>
</evidence>
<evidence type="ECO:0000305" key="6"/>